<name>AMT13_ALTAL</name>
<protein>
    <recommendedName>
        <fullName evidence="1">Thioredoxin AMT13</fullName>
    </recommendedName>
    <alternativeName>
        <fullName evidence="6">AM-toxin biosynthesis protein 13</fullName>
    </alternativeName>
</protein>
<comment type="function">
    <text evidence="3 4 5 7 9 10">Thioredoxin; part of the gene clusters that mediate the biosynthesis of AM-toxins, host-selective toxins (HSTs) causing Alternaria blotch on apple, a worldwide distributed disease (Probable). AM-toxins are cyclic depsipeptides containing the 3 residues 2-hydroxy-isovaleric acid (2-HIV), dehydroalanine, L-alanine which are common for all 3 AM-toxins I to III. The fourth precursor is L-alpha-amino-methoxyphenyl-valeric acid (L-Amv) for AM-toxin I, L-alpha-amino-phenyl-valeric acid (L-Apv) for AM-toxin II, and L-alpha-amino-hydroxyphenyl-valeric acid (L-Ahv) for AM-toxin III (Probable). AM-toxins have two target sites for affecting susceptible apple cells; they cause invagination of the plasma membrane and electrolyte loss and chloroplast disorganization (PubMed:22846083). The non-ribosomal peptide synthetase AMT1 contains 4 catalytic modules and is responsible for activation of each residue in AM-toxin (PubMed:10875335). The aldo-keto reductase AMT2 catalyzes the conversion of 2-keto-isovaleric acid (2-KIV) to 2-hydroxy-isovaleric acid (2-HIV), one of the precursor residues incorporated by AMT1 during AM-toxin biosynthesis, by reduction of its ketone to an alcohol (PubMed:15066029). The cytochrome P450 monooxygenase AMT3 and the thioesterase AMT4 are also important for AM-toxin production, but their exact function within the AM-toxin biosynthesis are not known yet (PubMed:17990954). Up to 21 proteins (including AMT1 to AMT4) are predicted to be involved in AM-toxin biosynthesis since their expression ishighly up-regulated in AM-toxin-producing cultures (PubMed:17990954).</text>
</comment>
<comment type="pathway">
    <text evidence="10">Mycotoxin biosynthesis.</text>
</comment>
<comment type="induction">
    <text evidence="5">Expression is up-regulated more than 10 fold in toxin producing cultures.</text>
</comment>
<comment type="miscellaneous">
    <text evidence="5">Gene clusters encoding host-selective toxins (HSTs) are localized on conditionally dispensable chromosomes (CDCs), also called supernumerary chromosomes, where they are present in multiple copies (PubMed:17990954). The CDCs are not essential for saprophytic growth but controls host-selective pathogenicity (PubMed:17990954).</text>
</comment>
<comment type="similarity">
    <text evidence="8">Belongs to the thioredoxin family.</text>
</comment>
<feature type="chain" id="PRO_0000444865" description="Thioredoxin AMT13">
    <location>
        <begin position="1"/>
        <end position="118"/>
    </location>
</feature>
<feature type="domain" description="Thioredoxin" evidence="2">
    <location>
        <begin position="1"/>
        <end position="110"/>
    </location>
</feature>
<feature type="disulfide bond" description="Redox-active" evidence="2">
    <location>
        <begin position="36"/>
        <end position="39"/>
    </location>
</feature>
<gene>
    <name evidence="6" type="primary">AMT13</name>
</gene>
<reference key="1">
    <citation type="journal article" date="2007" name="Mol. Plant Microbe Interact.">
        <title>Expression profiles of genes encoded by the supernumerary chromosome controlling AM-toxin biosynthesis and pathogenicity in the apple pathotype of Alternaria alternata.</title>
        <authorList>
            <person name="Harimoto Y."/>
            <person name="Hatta R."/>
            <person name="Kodama M."/>
            <person name="Yamamoto M."/>
            <person name="Otani H."/>
            <person name="Tsuge T."/>
        </authorList>
    </citation>
    <scope>NUCLEOTIDE SEQUENCE [GENOMIC DNA]</scope>
    <scope>INDUCTION</scope>
    <scope>PATHWAY</scope>
    <source>
        <strain>NBRC 8984</strain>
    </source>
</reference>
<reference key="2">
    <citation type="journal article" date="2000" name="Mol. Plant Microbe Interact.">
        <title>Cloning and characterization of a cyclic peptide synthetase gene from Alternaria alternata apple pathotype whose product is involved in AM-toxin synthesis and pathogenicity.</title>
        <authorList>
            <person name="Johnson R.D."/>
            <person name="Johnson L."/>
            <person name="Itoh Y."/>
            <person name="Kodama M."/>
            <person name="Otani H."/>
            <person name="Kohmoto K."/>
        </authorList>
    </citation>
    <scope>FUNCTION</scope>
    <source>
        <strain>M-71</strain>
    </source>
</reference>
<reference key="3">
    <citation type="journal article" date="2004" name="Mol. Microbiol.">
        <title>Dissection of the host range of the fungal plant pathogen Alternaria alternata by modification of secondary metabolism.</title>
        <authorList>
            <person name="Ito K."/>
            <person name="Tanaka T."/>
            <person name="Hatta R."/>
            <person name="Yamamoto M."/>
            <person name="Akimitsu K."/>
            <person name="Tsuge T."/>
        </authorList>
    </citation>
    <scope>FUNCTION</scope>
    <source>
        <strain>NBRC 8984</strain>
    </source>
</reference>
<reference key="4">
    <citation type="journal article" date="2013" name="FEMS Microbiol. Rev.">
        <title>Host-selective toxins produced by the plant pathogenic fungus Alternaria alternata.</title>
        <authorList>
            <person name="Tsuge T."/>
            <person name="Harimoto Y."/>
            <person name="Akimitsu K."/>
            <person name="Ohtani K."/>
            <person name="Kodama M."/>
            <person name="Akagi Y."/>
            <person name="Egusa M."/>
            <person name="Yamamoto M."/>
            <person name="Otani H."/>
        </authorList>
    </citation>
    <scope>REVIEW ON HOST-SELECTIVE TOXINS</scope>
</reference>
<accession>C9K7C5</accession>
<keyword id="KW-1015">Disulfide bond</keyword>
<keyword id="KW-0676">Redox-active center</keyword>
<keyword id="KW-0843">Virulence</keyword>
<organism>
    <name type="scientific">Alternaria alternata</name>
    <name type="common">Alternaria rot fungus</name>
    <name type="synonym">Torula alternata</name>
    <dbReference type="NCBI Taxonomy" id="5599"/>
    <lineage>
        <taxon>Eukaryota</taxon>
        <taxon>Fungi</taxon>
        <taxon>Dikarya</taxon>
        <taxon>Ascomycota</taxon>
        <taxon>Pezizomycotina</taxon>
        <taxon>Dothideomycetes</taxon>
        <taxon>Pleosporomycetidae</taxon>
        <taxon>Pleosporales</taxon>
        <taxon>Pleosporineae</taxon>
        <taxon>Pleosporaceae</taxon>
        <taxon>Alternaria</taxon>
        <taxon>Alternaria sect. Alternaria</taxon>
        <taxon>Alternaria alternata complex</taxon>
    </lineage>
</organism>
<dbReference type="EMBL" id="AB525198">
    <property type="protein sequence ID" value="BAI44749.1"/>
    <property type="molecule type" value="Genomic_DNA"/>
</dbReference>
<dbReference type="EMBL" id="AB525199">
    <property type="protein sequence ID" value="BAI44776.1"/>
    <property type="molecule type" value="Genomic_DNA"/>
</dbReference>
<dbReference type="SMR" id="C9K7C5"/>
<dbReference type="VEuPathDB" id="FungiDB:CC77DRAFT_1011037"/>
<dbReference type="CDD" id="cd02947">
    <property type="entry name" value="TRX_family"/>
    <property type="match status" value="1"/>
</dbReference>
<dbReference type="FunFam" id="3.40.30.10:FF:000245">
    <property type="entry name" value="Thioredoxin"/>
    <property type="match status" value="1"/>
</dbReference>
<dbReference type="Gene3D" id="3.40.30.10">
    <property type="entry name" value="Glutaredoxin"/>
    <property type="match status" value="1"/>
</dbReference>
<dbReference type="InterPro" id="IPR036249">
    <property type="entry name" value="Thioredoxin-like_sf"/>
</dbReference>
<dbReference type="InterPro" id="IPR013766">
    <property type="entry name" value="Thioredoxin_domain"/>
</dbReference>
<dbReference type="PANTHER" id="PTHR46115">
    <property type="entry name" value="THIOREDOXIN-LIKE PROTEIN 1"/>
    <property type="match status" value="1"/>
</dbReference>
<dbReference type="Pfam" id="PF00085">
    <property type="entry name" value="Thioredoxin"/>
    <property type="match status" value="1"/>
</dbReference>
<dbReference type="PRINTS" id="PR00421">
    <property type="entry name" value="THIOREDOXIN"/>
</dbReference>
<dbReference type="SUPFAM" id="SSF52833">
    <property type="entry name" value="Thioredoxin-like"/>
    <property type="match status" value="1"/>
</dbReference>
<dbReference type="PROSITE" id="PS51352">
    <property type="entry name" value="THIOREDOXIN_2"/>
    <property type="match status" value="1"/>
</dbReference>
<evidence type="ECO:0000255" key="1">
    <source>
        <dbReference type="PIRNR" id="PIRNR000077"/>
    </source>
</evidence>
<evidence type="ECO:0000255" key="2">
    <source>
        <dbReference type="PROSITE-ProRule" id="PRU00691"/>
    </source>
</evidence>
<evidence type="ECO:0000269" key="3">
    <source>
    </source>
</evidence>
<evidence type="ECO:0000269" key="4">
    <source>
    </source>
</evidence>
<evidence type="ECO:0000269" key="5">
    <source>
    </source>
</evidence>
<evidence type="ECO:0000303" key="6">
    <source>
    </source>
</evidence>
<evidence type="ECO:0000303" key="7">
    <source>
    </source>
</evidence>
<evidence type="ECO:0000305" key="8"/>
<evidence type="ECO:0000305" key="9">
    <source>
    </source>
</evidence>
<evidence type="ECO:0000305" key="10">
    <source>
    </source>
</evidence>
<sequence>MSDNKAIQTLQNTKEFNEVIKVKGSLIIFDCFSTWCGPCKVIDPQILKLSQAYSDTYFYKLNVDEVPDVAQKLDIRFVPTFLLFKDGEKVAEVVGAKPKALEDAIRANLGCGATHSSN</sequence>
<proteinExistence type="evidence at transcript level"/>